<protein>
    <recommendedName>
        <fullName>Cytochrome c oxidase subunit 1</fullName>
        <ecNumber>7.1.1.9</ecNumber>
    </recommendedName>
    <alternativeName>
        <fullName>Cytochrome c oxidase polypeptide I</fullName>
    </alternativeName>
</protein>
<keyword id="KW-0106">Calcium</keyword>
<keyword id="KW-0186">Copper</keyword>
<keyword id="KW-0249">Electron transport</keyword>
<keyword id="KW-0349">Heme</keyword>
<keyword id="KW-0408">Iron</keyword>
<keyword id="KW-0460">Magnesium</keyword>
<keyword id="KW-0472">Membrane</keyword>
<keyword id="KW-0479">Metal-binding</keyword>
<keyword id="KW-0496">Mitochondrion</keyword>
<keyword id="KW-0999">Mitochondrion inner membrane</keyword>
<keyword id="KW-0679">Respiratory chain</keyword>
<keyword id="KW-0915">Sodium</keyword>
<keyword id="KW-1278">Translocase</keyword>
<keyword id="KW-0812">Transmembrane</keyword>
<keyword id="KW-1133">Transmembrane helix</keyword>
<keyword id="KW-0813">Transport</keyword>
<name>COX1_HETHI</name>
<evidence type="ECO:0000250" key="1">
    <source>
        <dbReference type="UniProtKB" id="P00395"/>
    </source>
</evidence>
<evidence type="ECO:0000250" key="2">
    <source>
        <dbReference type="UniProtKB" id="P00396"/>
    </source>
</evidence>
<evidence type="ECO:0000250" key="3">
    <source>
        <dbReference type="UniProtKB" id="P00401"/>
    </source>
</evidence>
<evidence type="ECO:0000305" key="4"/>
<reference key="1">
    <citation type="journal article" date="2004" name="J. Mammal. Evol.">
        <title>DNA data support a rapid radiation of pocket gopher genera.</title>
        <authorList>
            <person name="Spradling T.A."/>
            <person name="Brant S.V."/>
            <person name="Hafner M.S."/>
            <person name="Dickerson C.J."/>
        </authorList>
    </citation>
    <scope>NUCLEOTIDE SEQUENCE [GENOMIC DNA]</scope>
</reference>
<dbReference type="EC" id="7.1.1.9"/>
<dbReference type="EMBL" id="AY331081">
    <property type="protein sequence ID" value="AAR02582.1"/>
    <property type="molecule type" value="Genomic_DNA"/>
</dbReference>
<dbReference type="SMR" id="Q6EGI3"/>
<dbReference type="UniPathway" id="UPA00705"/>
<dbReference type="GO" id="GO:0005743">
    <property type="term" value="C:mitochondrial inner membrane"/>
    <property type="evidence" value="ECO:0007669"/>
    <property type="project" value="UniProtKB-SubCell"/>
</dbReference>
<dbReference type="GO" id="GO:0045277">
    <property type="term" value="C:respiratory chain complex IV"/>
    <property type="evidence" value="ECO:0000250"/>
    <property type="project" value="UniProtKB"/>
</dbReference>
<dbReference type="GO" id="GO:0004129">
    <property type="term" value="F:cytochrome-c oxidase activity"/>
    <property type="evidence" value="ECO:0007669"/>
    <property type="project" value="UniProtKB-EC"/>
</dbReference>
<dbReference type="GO" id="GO:0020037">
    <property type="term" value="F:heme binding"/>
    <property type="evidence" value="ECO:0007669"/>
    <property type="project" value="InterPro"/>
</dbReference>
<dbReference type="GO" id="GO:0046872">
    <property type="term" value="F:metal ion binding"/>
    <property type="evidence" value="ECO:0007669"/>
    <property type="project" value="UniProtKB-KW"/>
</dbReference>
<dbReference type="GO" id="GO:0015990">
    <property type="term" value="P:electron transport coupled proton transport"/>
    <property type="evidence" value="ECO:0007669"/>
    <property type="project" value="TreeGrafter"/>
</dbReference>
<dbReference type="GO" id="GO:0006123">
    <property type="term" value="P:mitochondrial electron transport, cytochrome c to oxygen"/>
    <property type="evidence" value="ECO:0007669"/>
    <property type="project" value="TreeGrafter"/>
</dbReference>
<dbReference type="CDD" id="cd01663">
    <property type="entry name" value="Cyt_c_Oxidase_I"/>
    <property type="match status" value="1"/>
</dbReference>
<dbReference type="FunFam" id="1.20.210.10:FF:000001">
    <property type="entry name" value="Cytochrome c oxidase subunit 1"/>
    <property type="match status" value="1"/>
</dbReference>
<dbReference type="Gene3D" id="1.20.210.10">
    <property type="entry name" value="Cytochrome c oxidase-like, subunit I domain"/>
    <property type="match status" value="1"/>
</dbReference>
<dbReference type="InterPro" id="IPR023616">
    <property type="entry name" value="Cyt_c_oxase-like_su1_dom"/>
</dbReference>
<dbReference type="InterPro" id="IPR036927">
    <property type="entry name" value="Cyt_c_oxase-like_su1_sf"/>
</dbReference>
<dbReference type="InterPro" id="IPR000883">
    <property type="entry name" value="Cyt_C_Oxase_1"/>
</dbReference>
<dbReference type="InterPro" id="IPR023615">
    <property type="entry name" value="Cyt_c_Oxase_su1_BS"/>
</dbReference>
<dbReference type="InterPro" id="IPR033944">
    <property type="entry name" value="Cyt_c_oxase_su1_dom"/>
</dbReference>
<dbReference type="PANTHER" id="PTHR10422">
    <property type="entry name" value="CYTOCHROME C OXIDASE SUBUNIT 1"/>
    <property type="match status" value="1"/>
</dbReference>
<dbReference type="PANTHER" id="PTHR10422:SF18">
    <property type="entry name" value="CYTOCHROME C OXIDASE SUBUNIT 1"/>
    <property type="match status" value="1"/>
</dbReference>
<dbReference type="Pfam" id="PF00115">
    <property type="entry name" value="COX1"/>
    <property type="match status" value="1"/>
</dbReference>
<dbReference type="PRINTS" id="PR01165">
    <property type="entry name" value="CYCOXIDASEI"/>
</dbReference>
<dbReference type="SUPFAM" id="SSF81442">
    <property type="entry name" value="Cytochrome c oxidase subunit I-like"/>
    <property type="match status" value="1"/>
</dbReference>
<dbReference type="PROSITE" id="PS50855">
    <property type="entry name" value="COX1"/>
    <property type="match status" value="1"/>
</dbReference>
<dbReference type="PROSITE" id="PS00077">
    <property type="entry name" value="COX1_CUB"/>
    <property type="match status" value="1"/>
</dbReference>
<sequence length="515" mass="57050">MFINRWLFSTNHKDIGTLYMIFGAWAGMVGTGLSILIRAELGQPGSLLGDDQIYNVVVTAHAFVMIFFMVMPIMIGGFGNWLVPLMIGAPDMAFPRMNNMSFWLLPPSFFLLLASSMVEAGAGTGWTVYPPLAGNLAHAGASVDLTIFSLHLAGVSSILGAINFITTIINMKPPAITQYQTPLFVWSVMITAVLLLLSLPVLAAGITMLLTDRNLNTTFFDPAGGGDPILYQHLFWFFGHPEVYILILPGFGMISHIVTYYSGKKEPFGYMGMVWAMMSIGFLGFIVWAHHMFTVGMDVDTRAYFTSATMIIAIPTGVKVFSWLATLHGGNIKWSPAMLWALGFIFLFTIGGLTGIVLSNSSLDIVLHDTYYVVAHFHYVLSMGAVFAIMGGFVHWFPLFTGYTLNDTWAKIHFTIMFVGVNMTFFPQHFLGLAGMPRRYSDYPDAYTTWNTISSMGSFISLTAVILMVFMIWEAFASKRVVKSVSLTSTNLEWIHGCPPPFHTFEEPAFIKSSH</sequence>
<comment type="function">
    <text evidence="3">Component of the cytochrome c oxidase, the last enzyme in the mitochondrial electron transport chain which drives oxidative phosphorylation. The respiratory chain contains 3 multisubunit complexes succinate dehydrogenase (complex II, CII), ubiquinol-cytochrome c oxidoreductase (cytochrome b-c1 complex, complex III, CIII) and cytochrome c oxidase (complex IV, CIV), that cooperate to transfer electrons derived from NADH and succinate to molecular oxygen, creating an electrochemical gradient over the inner membrane that drives transmembrane transport and the ATP synthase. Cytochrome c oxidase is the component of the respiratory chain that catalyzes the reduction of oxygen to water. Electrons originating from reduced cytochrome c in the intermembrane space (IMS) are transferred via the dinuclear copper A center (CU(A)) of subunit 2 and heme A of subunit 1 to the active site in subunit 1, a binuclear center (BNC) formed by heme A3 and copper B (CU(B)). The BNC reduces molecular oxygen to 2 water molecules using 4 electrons from cytochrome c in the IMS and 4 protons from the mitochondrial matrix.</text>
</comment>
<comment type="catalytic activity">
    <reaction evidence="3">
        <text>4 Fe(II)-[cytochrome c] + O2 + 8 H(+)(in) = 4 Fe(III)-[cytochrome c] + 2 H2O + 4 H(+)(out)</text>
        <dbReference type="Rhea" id="RHEA:11436"/>
        <dbReference type="Rhea" id="RHEA-COMP:10350"/>
        <dbReference type="Rhea" id="RHEA-COMP:14399"/>
        <dbReference type="ChEBI" id="CHEBI:15377"/>
        <dbReference type="ChEBI" id="CHEBI:15378"/>
        <dbReference type="ChEBI" id="CHEBI:15379"/>
        <dbReference type="ChEBI" id="CHEBI:29033"/>
        <dbReference type="ChEBI" id="CHEBI:29034"/>
        <dbReference type="EC" id="7.1.1.9"/>
    </reaction>
    <physiologicalReaction direction="left-to-right" evidence="3">
        <dbReference type="Rhea" id="RHEA:11437"/>
    </physiologicalReaction>
</comment>
<comment type="cofactor">
    <cofactor evidence="2">
        <name>heme</name>
        <dbReference type="ChEBI" id="CHEBI:30413"/>
    </cofactor>
    <text evidence="2">Binds 2 heme A groups non-covalently per subunit.</text>
</comment>
<comment type="cofactor">
    <cofactor evidence="2">
        <name>Cu cation</name>
        <dbReference type="ChEBI" id="CHEBI:23378"/>
    </cofactor>
    <text evidence="2">Binds a copper B center.</text>
</comment>
<comment type="pathway">
    <text evidence="3">Energy metabolism; oxidative phosphorylation.</text>
</comment>
<comment type="subunit">
    <text evidence="1 2">Component of the cytochrome c oxidase (complex IV, CIV), a multisubunit enzyme composed of 14 subunits. The complex is composed of a catalytic core of 3 subunits MT-CO1, MT-CO2 and MT-CO3, encoded in the mitochondrial DNA, and 11 supernumerary subunits COX4I, COX5A, COX5B, COX6A, COX6B, COX6C, COX7A, COX7B, COX7C, COX8 and NDUFA4, which are encoded in the nuclear genome. The complex exists as a monomer or a dimer and forms supercomplexes (SCs) in the inner mitochondrial membrane with NADH-ubiquinone oxidoreductase (complex I, CI) and ubiquinol-cytochrome c oxidoreductase (cytochrome b-c1 complex, complex III, CIII), resulting in different assemblies (supercomplex SCI(1)III(2)IV(1) and megacomplex MCI(2)III(2)IV(2)) (By similarity). As a newly synthesized protein, rapidly incorporates into a multi-subunit assembly intermediate in the inner membrane, called MITRAC (mitochondrial translation regulation assembly intermediate of cytochrome c oxidase) complex, whose core components are COA3/MITRAC12 and COX14. Within the MITRAC complex, interacts with COA3 and with SMIM20/MITRAC7; the interaction with SMIM20 stabilizes the newly synthesized MT-CO1 and prevents its premature turnover. Interacts with TMEM177 in a COX20-dependent manner (By similarity).</text>
</comment>
<comment type="subcellular location">
    <subcellularLocation>
        <location evidence="2">Mitochondrion inner membrane</location>
        <topology evidence="2">Multi-pass membrane protein</topology>
    </subcellularLocation>
</comment>
<comment type="similarity">
    <text evidence="4">Belongs to the heme-copper respiratory oxidase family.</text>
</comment>
<accession>Q6EGI3</accession>
<organism>
    <name type="scientific">Heterogeomys hispidus</name>
    <name type="common">Hispid pocket gopher</name>
    <name type="synonym">Orthogeomys hispidus</name>
    <dbReference type="NCBI Taxonomy" id="3370058"/>
    <lineage>
        <taxon>Eukaryota</taxon>
        <taxon>Metazoa</taxon>
        <taxon>Chordata</taxon>
        <taxon>Craniata</taxon>
        <taxon>Vertebrata</taxon>
        <taxon>Euteleostomi</taxon>
        <taxon>Mammalia</taxon>
        <taxon>Eutheria</taxon>
        <taxon>Euarchontoglires</taxon>
        <taxon>Glires</taxon>
        <taxon>Rodentia</taxon>
        <taxon>Castorimorpha</taxon>
        <taxon>Geomyidae</taxon>
        <taxon>Heterogeomys</taxon>
    </lineage>
</organism>
<proteinExistence type="inferred from homology"/>
<feature type="chain" id="PRO_0000183373" description="Cytochrome c oxidase subunit 1">
    <location>
        <begin position="1"/>
        <end position="515"/>
    </location>
</feature>
<feature type="topological domain" description="Mitochondrial matrix" evidence="2">
    <location>
        <begin position="1"/>
        <end position="11"/>
    </location>
</feature>
<feature type="transmembrane region" description="Helical; Name=I" evidence="2">
    <location>
        <begin position="12"/>
        <end position="40"/>
    </location>
</feature>
<feature type="topological domain" description="Mitochondrial intermembrane" evidence="2">
    <location>
        <begin position="41"/>
        <end position="50"/>
    </location>
</feature>
<feature type="transmembrane region" description="Helical; Name=II" evidence="2">
    <location>
        <begin position="51"/>
        <end position="86"/>
    </location>
</feature>
<feature type="topological domain" description="Mitochondrial matrix" evidence="2">
    <location>
        <begin position="87"/>
        <end position="94"/>
    </location>
</feature>
<feature type="transmembrane region" description="Helical; Name=III" evidence="2">
    <location>
        <begin position="95"/>
        <end position="117"/>
    </location>
</feature>
<feature type="topological domain" description="Mitochondrial intermembrane" evidence="2">
    <location>
        <begin position="118"/>
        <end position="140"/>
    </location>
</feature>
<feature type="transmembrane region" description="Helical; Name=IV" evidence="2">
    <location>
        <begin position="141"/>
        <end position="170"/>
    </location>
</feature>
<feature type="topological domain" description="Mitochondrial matrix" evidence="2">
    <location>
        <begin position="171"/>
        <end position="182"/>
    </location>
</feature>
<feature type="transmembrane region" description="Helical; Name=V" evidence="2">
    <location>
        <begin position="183"/>
        <end position="212"/>
    </location>
</feature>
<feature type="topological domain" description="Mitochondrial intermembrane" evidence="2">
    <location>
        <begin position="213"/>
        <end position="227"/>
    </location>
</feature>
<feature type="transmembrane region" description="Helical; Name=VI" evidence="2">
    <location>
        <begin position="228"/>
        <end position="261"/>
    </location>
</feature>
<feature type="topological domain" description="Mitochondrial matrix" evidence="2">
    <location>
        <begin position="262"/>
        <end position="269"/>
    </location>
</feature>
<feature type="transmembrane region" description="Helical; Name=VII" evidence="2">
    <location>
        <begin position="270"/>
        <end position="286"/>
    </location>
</feature>
<feature type="topological domain" description="Mitochondrial intermembrane" evidence="2">
    <location>
        <begin position="287"/>
        <end position="298"/>
    </location>
</feature>
<feature type="transmembrane region" description="Helical; Name=VIII" evidence="2">
    <location>
        <begin position="299"/>
        <end position="327"/>
    </location>
</feature>
<feature type="topological domain" description="Mitochondrial matrix" evidence="2">
    <location>
        <begin position="328"/>
        <end position="335"/>
    </location>
</feature>
<feature type="transmembrane region" description="Helical; Name=IX" evidence="2">
    <location>
        <begin position="336"/>
        <end position="357"/>
    </location>
</feature>
<feature type="topological domain" description="Mitochondrial intermembrane" evidence="2">
    <location>
        <begin position="358"/>
        <end position="370"/>
    </location>
</feature>
<feature type="transmembrane region" description="Helical; Name=X" evidence="2">
    <location>
        <begin position="371"/>
        <end position="400"/>
    </location>
</feature>
<feature type="topological domain" description="Mitochondrial matrix" evidence="2">
    <location>
        <begin position="401"/>
        <end position="406"/>
    </location>
</feature>
<feature type="transmembrane region" description="Helical; Name=XI" evidence="2">
    <location>
        <begin position="407"/>
        <end position="433"/>
    </location>
</feature>
<feature type="topological domain" description="Mitochondrial intermembrane" evidence="2">
    <location>
        <begin position="434"/>
        <end position="446"/>
    </location>
</feature>
<feature type="transmembrane region" description="Helical; Name=XII" evidence="2">
    <location>
        <begin position="447"/>
        <end position="478"/>
    </location>
</feature>
<feature type="topological domain" description="Mitochondrial matrix" evidence="2">
    <location>
        <begin position="479"/>
        <end position="515"/>
    </location>
</feature>
<feature type="binding site" evidence="2">
    <location>
        <position position="40"/>
    </location>
    <ligand>
        <name>Na(+)</name>
        <dbReference type="ChEBI" id="CHEBI:29101"/>
    </ligand>
</feature>
<feature type="binding site" evidence="2">
    <location>
        <position position="45"/>
    </location>
    <ligand>
        <name>Na(+)</name>
        <dbReference type="ChEBI" id="CHEBI:29101"/>
    </ligand>
</feature>
<feature type="binding site" description="axial binding residue" evidence="2">
    <location>
        <position position="61"/>
    </location>
    <ligand>
        <name>Fe(II)-heme a</name>
        <dbReference type="ChEBI" id="CHEBI:61715"/>
        <note>low-spin</note>
    </ligand>
    <ligandPart>
        <name>Fe</name>
        <dbReference type="ChEBI" id="CHEBI:18248"/>
    </ligandPart>
</feature>
<feature type="binding site" evidence="2">
    <location>
        <position position="240"/>
    </location>
    <ligand>
        <name>Cu cation</name>
        <dbReference type="ChEBI" id="CHEBI:23378"/>
        <label>B</label>
    </ligand>
</feature>
<feature type="binding site" evidence="2">
    <location>
        <position position="244"/>
    </location>
    <ligand>
        <name>O2</name>
        <dbReference type="ChEBI" id="CHEBI:15379"/>
    </ligand>
</feature>
<feature type="binding site" evidence="2">
    <location>
        <position position="290"/>
    </location>
    <ligand>
        <name>Cu cation</name>
        <dbReference type="ChEBI" id="CHEBI:23378"/>
        <label>B</label>
    </ligand>
</feature>
<feature type="binding site" evidence="2">
    <location>
        <position position="291"/>
    </location>
    <ligand>
        <name>Cu cation</name>
        <dbReference type="ChEBI" id="CHEBI:23378"/>
        <label>B</label>
    </ligand>
</feature>
<feature type="binding site" evidence="2">
    <location>
        <position position="368"/>
    </location>
    <ligand>
        <name>Mg(2+)</name>
        <dbReference type="ChEBI" id="CHEBI:18420"/>
        <note>ligand shared with MT-CO2</note>
    </ligand>
</feature>
<feature type="binding site" evidence="2">
    <location>
        <position position="369"/>
    </location>
    <ligand>
        <name>Mg(2+)</name>
        <dbReference type="ChEBI" id="CHEBI:18420"/>
        <note>ligand shared with MT-CO2</note>
    </ligand>
</feature>
<feature type="binding site" description="axial binding residue" evidence="2">
    <location>
        <position position="376"/>
    </location>
    <ligand>
        <name>heme a3</name>
        <dbReference type="ChEBI" id="CHEBI:83282"/>
        <note>high-spin</note>
    </ligand>
    <ligandPart>
        <name>Fe</name>
        <dbReference type="ChEBI" id="CHEBI:18248"/>
    </ligandPart>
</feature>
<feature type="binding site" description="axial binding residue" evidence="2">
    <location>
        <position position="378"/>
    </location>
    <ligand>
        <name>Fe(II)-heme a</name>
        <dbReference type="ChEBI" id="CHEBI:61715"/>
        <note>low-spin</note>
    </ligand>
    <ligandPart>
        <name>Fe</name>
        <dbReference type="ChEBI" id="CHEBI:18248"/>
    </ligandPart>
</feature>
<feature type="binding site" evidence="2">
    <location>
        <position position="441"/>
    </location>
    <ligand>
        <name>Na(+)</name>
        <dbReference type="ChEBI" id="CHEBI:29101"/>
    </ligand>
</feature>
<feature type="cross-link" description="1'-histidyl-3'-tyrosine (His-Tyr)" evidence="2">
    <location>
        <begin position="240"/>
        <end position="244"/>
    </location>
</feature>
<geneLocation type="mitochondrion"/>
<gene>
    <name type="primary">MT-CO1</name>
    <name type="synonym">COI</name>
    <name type="synonym">COXI</name>
    <name type="synonym">MTCO1</name>
</gene>